<organism>
    <name type="scientific">Teredinibacter turnerae (strain ATCC 39867 / T7901)</name>
    <dbReference type="NCBI Taxonomy" id="377629"/>
    <lineage>
        <taxon>Bacteria</taxon>
        <taxon>Pseudomonadati</taxon>
        <taxon>Pseudomonadota</taxon>
        <taxon>Gammaproteobacteria</taxon>
        <taxon>Cellvibrionales</taxon>
        <taxon>Cellvibrionaceae</taxon>
        <taxon>Teredinibacter</taxon>
    </lineage>
</organism>
<reference key="1">
    <citation type="journal article" date="2009" name="PLoS ONE">
        <title>The complete genome of Teredinibacter turnerae T7901: an intracellular endosymbiont of marine wood-boring bivalves (shipworms).</title>
        <authorList>
            <person name="Yang J.C."/>
            <person name="Madupu R."/>
            <person name="Durkin A.S."/>
            <person name="Ekborg N.A."/>
            <person name="Pedamallu C.S."/>
            <person name="Hostetler J.B."/>
            <person name="Radune D."/>
            <person name="Toms B.S."/>
            <person name="Henrissat B."/>
            <person name="Coutinho P.M."/>
            <person name="Schwarz S."/>
            <person name="Field L."/>
            <person name="Trindade-Silva A.E."/>
            <person name="Soares C.A.G."/>
            <person name="Elshahawi S."/>
            <person name="Hanora A."/>
            <person name="Schmidt E.W."/>
            <person name="Haygood M.G."/>
            <person name="Posfai J."/>
            <person name="Benner J."/>
            <person name="Madinger C."/>
            <person name="Nove J."/>
            <person name="Anton B."/>
            <person name="Chaudhary K."/>
            <person name="Foster J."/>
            <person name="Holman A."/>
            <person name="Kumar S."/>
            <person name="Lessard P.A."/>
            <person name="Luyten Y.A."/>
            <person name="Slatko B."/>
            <person name="Wood N."/>
            <person name="Wu B."/>
            <person name="Teplitski M."/>
            <person name="Mougous J.D."/>
            <person name="Ward N."/>
            <person name="Eisen J.A."/>
            <person name="Badger J.H."/>
            <person name="Distel D.L."/>
        </authorList>
    </citation>
    <scope>NUCLEOTIDE SEQUENCE [LARGE SCALE GENOMIC DNA]</scope>
    <source>
        <strain>ATCC 39867 / T7901</strain>
    </source>
</reference>
<feature type="chain" id="PRO_1000205377" description="Small ribosomal subunit protein bS21">
    <location>
        <begin position="1"/>
        <end position="71"/>
    </location>
</feature>
<feature type="region of interest" description="Disordered" evidence="2">
    <location>
        <begin position="48"/>
        <end position="71"/>
    </location>
</feature>
<feature type="compositionally biased region" description="Basic residues" evidence="2">
    <location>
        <begin position="48"/>
        <end position="59"/>
    </location>
</feature>
<feature type="compositionally biased region" description="Basic and acidic residues" evidence="2">
    <location>
        <begin position="60"/>
        <end position="71"/>
    </location>
</feature>
<proteinExistence type="inferred from homology"/>
<accession>C5BPR2</accession>
<dbReference type="EMBL" id="CP001614">
    <property type="protein sequence ID" value="ACR11190.1"/>
    <property type="molecule type" value="Genomic_DNA"/>
</dbReference>
<dbReference type="RefSeq" id="WP_015817302.1">
    <property type="nucleotide sequence ID" value="NC_012997.1"/>
</dbReference>
<dbReference type="SMR" id="C5BPR2"/>
<dbReference type="STRING" id="377629.TERTU_3162"/>
<dbReference type="GeneID" id="58410553"/>
<dbReference type="GeneID" id="93855717"/>
<dbReference type="KEGG" id="ttu:TERTU_3162"/>
<dbReference type="eggNOG" id="COG0828">
    <property type="taxonomic scope" value="Bacteria"/>
</dbReference>
<dbReference type="HOGENOM" id="CLU_159258_1_0_6"/>
<dbReference type="OrthoDB" id="9799244at2"/>
<dbReference type="Proteomes" id="UP000009080">
    <property type="component" value="Chromosome"/>
</dbReference>
<dbReference type="GO" id="GO:1990904">
    <property type="term" value="C:ribonucleoprotein complex"/>
    <property type="evidence" value="ECO:0007669"/>
    <property type="project" value="UniProtKB-KW"/>
</dbReference>
<dbReference type="GO" id="GO:0005840">
    <property type="term" value="C:ribosome"/>
    <property type="evidence" value="ECO:0007669"/>
    <property type="project" value="UniProtKB-KW"/>
</dbReference>
<dbReference type="GO" id="GO:0003735">
    <property type="term" value="F:structural constituent of ribosome"/>
    <property type="evidence" value="ECO:0007669"/>
    <property type="project" value="InterPro"/>
</dbReference>
<dbReference type="GO" id="GO:0006412">
    <property type="term" value="P:translation"/>
    <property type="evidence" value="ECO:0007669"/>
    <property type="project" value="UniProtKB-UniRule"/>
</dbReference>
<dbReference type="Gene3D" id="1.20.5.1150">
    <property type="entry name" value="Ribosomal protein S8"/>
    <property type="match status" value="1"/>
</dbReference>
<dbReference type="HAMAP" id="MF_00358">
    <property type="entry name" value="Ribosomal_bS21"/>
    <property type="match status" value="1"/>
</dbReference>
<dbReference type="InterPro" id="IPR001911">
    <property type="entry name" value="Ribosomal_bS21"/>
</dbReference>
<dbReference type="InterPro" id="IPR018278">
    <property type="entry name" value="Ribosomal_bS21_CS"/>
</dbReference>
<dbReference type="InterPro" id="IPR038380">
    <property type="entry name" value="Ribosomal_bS21_sf"/>
</dbReference>
<dbReference type="NCBIfam" id="TIGR00030">
    <property type="entry name" value="S21p"/>
    <property type="match status" value="1"/>
</dbReference>
<dbReference type="PANTHER" id="PTHR21109">
    <property type="entry name" value="MITOCHONDRIAL 28S RIBOSOMAL PROTEIN S21"/>
    <property type="match status" value="1"/>
</dbReference>
<dbReference type="PANTHER" id="PTHR21109:SF22">
    <property type="entry name" value="SMALL RIBOSOMAL SUBUNIT PROTEIN BS21"/>
    <property type="match status" value="1"/>
</dbReference>
<dbReference type="Pfam" id="PF01165">
    <property type="entry name" value="Ribosomal_S21"/>
    <property type="match status" value="1"/>
</dbReference>
<dbReference type="PRINTS" id="PR00976">
    <property type="entry name" value="RIBOSOMALS21"/>
</dbReference>
<dbReference type="PROSITE" id="PS01181">
    <property type="entry name" value="RIBOSOMAL_S21"/>
    <property type="match status" value="1"/>
</dbReference>
<keyword id="KW-1185">Reference proteome</keyword>
<keyword id="KW-0687">Ribonucleoprotein</keyword>
<keyword id="KW-0689">Ribosomal protein</keyword>
<gene>
    <name evidence="1" type="primary">rpsU</name>
    <name type="ordered locus">TERTU_3162</name>
</gene>
<evidence type="ECO:0000255" key="1">
    <source>
        <dbReference type="HAMAP-Rule" id="MF_00358"/>
    </source>
</evidence>
<evidence type="ECO:0000256" key="2">
    <source>
        <dbReference type="SAM" id="MobiDB-lite"/>
    </source>
</evidence>
<evidence type="ECO:0000305" key="3"/>
<protein>
    <recommendedName>
        <fullName evidence="1">Small ribosomal subunit protein bS21</fullName>
    </recommendedName>
    <alternativeName>
        <fullName evidence="3">30S ribosomal protein S21</fullName>
    </alternativeName>
</protein>
<comment type="similarity">
    <text evidence="1">Belongs to the bacterial ribosomal protein bS21 family.</text>
</comment>
<name>RS21_TERTT</name>
<sequence>MPSVKLKENEPFDFALRRFKRSCEKAGVLAEVRRREFYEKPTSVRKRKAAAAVKRHAKKVQRENRKFQRLY</sequence>